<comment type="function">
    <text evidence="1">Hydrolyzes ribosome-free peptidyl-tRNAs (with 1 or more amino acids incorporated), which drop off the ribosome during protein synthesis, or as a result of ribosome stalling.</text>
</comment>
<comment type="function">
    <text evidence="1">Catalyzes the release of premature peptidyl moieties from peptidyl-tRNA molecules trapped in stalled 50S ribosomal subunits, and thus maintains levels of free tRNAs and 50S ribosomes.</text>
</comment>
<comment type="catalytic activity">
    <reaction evidence="1">
        <text>an N-acyl-L-alpha-aminoacyl-tRNA + H2O = an N-acyl-L-amino acid + a tRNA + H(+)</text>
        <dbReference type="Rhea" id="RHEA:54448"/>
        <dbReference type="Rhea" id="RHEA-COMP:10123"/>
        <dbReference type="Rhea" id="RHEA-COMP:13883"/>
        <dbReference type="ChEBI" id="CHEBI:15377"/>
        <dbReference type="ChEBI" id="CHEBI:15378"/>
        <dbReference type="ChEBI" id="CHEBI:59874"/>
        <dbReference type="ChEBI" id="CHEBI:78442"/>
        <dbReference type="ChEBI" id="CHEBI:138191"/>
        <dbReference type="EC" id="3.1.1.29"/>
    </reaction>
</comment>
<comment type="subunit">
    <text evidence="1">Monomer.</text>
</comment>
<comment type="subcellular location">
    <subcellularLocation>
        <location evidence="1">Cytoplasm</location>
    </subcellularLocation>
</comment>
<comment type="similarity">
    <text evidence="1">Belongs to the PTH family.</text>
</comment>
<sequence length="191" mass="20456">MAEPLLVVGLGNPGANYARTRHNLGFVVADLLAARLGAKFKAHKRSGAEVATGRSAGRSLVLAKPRCYMNESGRQIGPLAKFYSVAPANIIVIHDDLDLEFGRIRLKIGGGEGGHNGLRSVVAALGTKDFQRVRIGIGRPPGRKDPAAFVLENFTPAERAEVPTICEQAADATELLIEQGMEPAQNRVHAW</sequence>
<evidence type="ECO:0000255" key="1">
    <source>
        <dbReference type="HAMAP-Rule" id="MF_00083"/>
    </source>
</evidence>
<name>PTH_MYCBT</name>
<proteinExistence type="inferred from homology"/>
<protein>
    <recommendedName>
        <fullName evidence="1">Peptidyl-tRNA hydrolase</fullName>
        <shortName evidence="1">Pth</shortName>
        <ecNumber evidence="1">3.1.1.29</ecNumber>
    </recommendedName>
</protein>
<gene>
    <name evidence="1" type="primary">pth</name>
    <name type="ordered locus">JTY_1043</name>
</gene>
<dbReference type="EC" id="3.1.1.29" evidence="1"/>
<dbReference type="EMBL" id="AP010918">
    <property type="protein sequence ID" value="BAH25334.1"/>
    <property type="molecule type" value="Genomic_DNA"/>
</dbReference>
<dbReference type="RefSeq" id="WP_003405251.1">
    <property type="nucleotide sequence ID" value="NZ_CP014566.1"/>
</dbReference>
<dbReference type="BMRB" id="C1AM05"/>
<dbReference type="SMR" id="C1AM05"/>
<dbReference type="GeneID" id="45424985"/>
<dbReference type="KEGG" id="mbt:JTY_1043"/>
<dbReference type="HOGENOM" id="CLU_062456_2_2_11"/>
<dbReference type="GO" id="GO:0005737">
    <property type="term" value="C:cytoplasm"/>
    <property type="evidence" value="ECO:0007669"/>
    <property type="project" value="UniProtKB-SubCell"/>
</dbReference>
<dbReference type="GO" id="GO:0004045">
    <property type="term" value="F:peptidyl-tRNA hydrolase activity"/>
    <property type="evidence" value="ECO:0007669"/>
    <property type="project" value="UniProtKB-UniRule"/>
</dbReference>
<dbReference type="GO" id="GO:0000049">
    <property type="term" value="F:tRNA binding"/>
    <property type="evidence" value="ECO:0007669"/>
    <property type="project" value="UniProtKB-UniRule"/>
</dbReference>
<dbReference type="GO" id="GO:0006515">
    <property type="term" value="P:protein quality control for misfolded or incompletely synthesized proteins"/>
    <property type="evidence" value="ECO:0007669"/>
    <property type="project" value="UniProtKB-UniRule"/>
</dbReference>
<dbReference type="GO" id="GO:0072344">
    <property type="term" value="P:rescue of stalled ribosome"/>
    <property type="evidence" value="ECO:0007669"/>
    <property type="project" value="UniProtKB-UniRule"/>
</dbReference>
<dbReference type="CDD" id="cd00462">
    <property type="entry name" value="PTH"/>
    <property type="match status" value="1"/>
</dbReference>
<dbReference type="FunFam" id="3.40.50.1470:FF:000001">
    <property type="entry name" value="Peptidyl-tRNA hydrolase"/>
    <property type="match status" value="1"/>
</dbReference>
<dbReference type="Gene3D" id="3.40.50.1470">
    <property type="entry name" value="Peptidyl-tRNA hydrolase"/>
    <property type="match status" value="1"/>
</dbReference>
<dbReference type="HAMAP" id="MF_00083">
    <property type="entry name" value="Pept_tRNA_hydro_bact"/>
    <property type="match status" value="1"/>
</dbReference>
<dbReference type="InterPro" id="IPR001328">
    <property type="entry name" value="Pept_tRNA_hydro"/>
</dbReference>
<dbReference type="InterPro" id="IPR018171">
    <property type="entry name" value="Pept_tRNA_hydro_CS"/>
</dbReference>
<dbReference type="InterPro" id="IPR036416">
    <property type="entry name" value="Pept_tRNA_hydro_sf"/>
</dbReference>
<dbReference type="NCBIfam" id="TIGR00447">
    <property type="entry name" value="pth"/>
    <property type="match status" value="1"/>
</dbReference>
<dbReference type="PANTHER" id="PTHR17224">
    <property type="entry name" value="PEPTIDYL-TRNA HYDROLASE"/>
    <property type="match status" value="1"/>
</dbReference>
<dbReference type="PANTHER" id="PTHR17224:SF1">
    <property type="entry name" value="PEPTIDYL-TRNA HYDROLASE"/>
    <property type="match status" value="1"/>
</dbReference>
<dbReference type="Pfam" id="PF01195">
    <property type="entry name" value="Pept_tRNA_hydro"/>
    <property type="match status" value="1"/>
</dbReference>
<dbReference type="SUPFAM" id="SSF53178">
    <property type="entry name" value="Peptidyl-tRNA hydrolase-like"/>
    <property type="match status" value="1"/>
</dbReference>
<dbReference type="PROSITE" id="PS01195">
    <property type="entry name" value="PEPT_TRNA_HYDROL_1"/>
    <property type="match status" value="1"/>
</dbReference>
<dbReference type="PROSITE" id="PS01196">
    <property type="entry name" value="PEPT_TRNA_HYDROL_2"/>
    <property type="match status" value="1"/>
</dbReference>
<accession>C1AM05</accession>
<reference key="1">
    <citation type="journal article" date="2009" name="Vaccine">
        <title>Whole genome sequence analysis of Mycobacterium bovis bacillus Calmette-Guerin (BCG) Tokyo 172: a comparative study of BCG vaccine substrains.</title>
        <authorList>
            <person name="Seki M."/>
            <person name="Honda I."/>
            <person name="Fujita I."/>
            <person name="Yano I."/>
            <person name="Yamamoto S."/>
            <person name="Koyama A."/>
        </authorList>
    </citation>
    <scope>NUCLEOTIDE SEQUENCE [LARGE SCALE GENOMIC DNA]</scope>
    <source>
        <strain>BCG / Tokyo 172 / ATCC 35737 / TMC 1019</strain>
    </source>
</reference>
<organism>
    <name type="scientific">Mycobacterium bovis (strain BCG / Tokyo 172 / ATCC 35737 / TMC 1019)</name>
    <dbReference type="NCBI Taxonomy" id="561275"/>
    <lineage>
        <taxon>Bacteria</taxon>
        <taxon>Bacillati</taxon>
        <taxon>Actinomycetota</taxon>
        <taxon>Actinomycetes</taxon>
        <taxon>Mycobacteriales</taxon>
        <taxon>Mycobacteriaceae</taxon>
        <taxon>Mycobacterium</taxon>
        <taxon>Mycobacterium tuberculosis complex</taxon>
    </lineage>
</organism>
<keyword id="KW-0963">Cytoplasm</keyword>
<keyword id="KW-0378">Hydrolase</keyword>
<keyword id="KW-0694">RNA-binding</keyword>
<keyword id="KW-0820">tRNA-binding</keyword>
<feature type="chain" id="PRO_1000118401" description="Peptidyl-tRNA hydrolase">
    <location>
        <begin position="1"/>
        <end position="191"/>
    </location>
</feature>
<feature type="active site" description="Proton acceptor" evidence="1">
    <location>
        <position position="22"/>
    </location>
</feature>
<feature type="binding site" evidence="1">
    <location>
        <position position="17"/>
    </location>
    <ligand>
        <name>tRNA</name>
        <dbReference type="ChEBI" id="CHEBI:17843"/>
    </ligand>
</feature>
<feature type="binding site" evidence="1">
    <location>
        <position position="68"/>
    </location>
    <ligand>
        <name>tRNA</name>
        <dbReference type="ChEBI" id="CHEBI:17843"/>
    </ligand>
</feature>
<feature type="binding site" evidence="1">
    <location>
        <position position="70"/>
    </location>
    <ligand>
        <name>tRNA</name>
        <dbReference type="ChEBI" id="CHEBI:17843"/>
    </ligand>
</feature>
<feature type="binding site" evidence="1">
    <location>
        <position position="116"/>
    </location>
    <ligand>
        <name>tRNA</name>
        <dbReference type="ChEBI" id="CHEBI:17843"/>
    </ligand>
</feature>
<feature type="site" description="Discriminates between blocked and unblocked aminoacyl-tRNA" evidence="1">
    <location>
        <position position="12"/>
    </location>
</feature>
<feature type="site" description="Stabilizes the basic form of H active site to accept a proton" evidence="1">
    <location>
        <position position="95"/>
    </location>
</feature>